<organism>
    <name type="scientific">Lepidium virginicum</name>
    <name type="common">Virginia pepperweed</name>
    <dbReference type="NCBI Taxonomy" id="59292"/>
    <lineage>
        <taxon>Eukaryota</taxon>
        <taxon>Viridiplantae</taxon>
        <taxon>Streptophyta</taxon>
        <taxon>Embryophyta</taxon>
        <taxon>Tracheophyta</taxon>
        <taxon>Spermatophyta</taxon>
        <taxon>Magnoliopsida</taxon>
        <taxon>eudicotyledons</taxon>
        <taxon>Gunneridae</taxon>
        <taxon>Pentapetalae</taxon>
        <taxon>rosids</taxon>
        <taxon>malvids</taxon>
        <taxon>Brassicales</taxon>
        <taxon>Brassicaceae</taxon>
        <taxon>Lepidieae</taxon>
        <taxon>Lepidium</taxon>
    </lineage>
</organism>
<reference key="1">
    <citation type="submission" date="2007-03" db="EMBL/GenBank/DDBJ databases">
        <title>Sequencing analysis of Lepidium virginicum JO26 chloroplast DNA.</title>
        <authorList>
            <person name="Hosouchi T."/>
            <person name="Tsuruoka H."/>
            <person name="Kotani H."/>
        </authorList>
    </citation>
    <scope>NUCLEOTIDE SEQUENCE [LARGE SCALE GENOMIC DNA]</scope>
</reference>
<comment type="subcellular location">
    <subcellularLocation>
        <location>Plastid</location>
        <location>Chloroplast</location>
    </subcellularLocation>
</comment>
<comment type="similarity">
    <text evidence="1">Belongs to the bacterial ribosomal protein bL33 family.</text>
</comment>
<geneLocation type="chloroplast"/>
<protein>
    <recommendedName>
        <fullName evidence="1">Large ribosomal subunit protein bL33c</fullName>
    </recommendedName>
    <alternativeName>
        <fullName evidence="2">50S ribosomal protein L33, chloroplastic</fullName>
    </alternativeName>
</protein>
<proteinExistence type="inferred from homology"/>
<sequence length="66" mass="7682">MAKGKDVRVTIILECTSCVRNDIKKESAGISRYITQKNRHNTPSRLELRKFCAYCYKHTIHGEIKK</sequence>
<dbReference type="EMBL" id="AP009374">
    <property type="protein sequence ID" value="BAF50482.1"/>
    <property type="molecule type" value="Genomic_DNA"/>
</dbReference>
<dbReference type="RefSeq" id="YP_001123658.1">
    <property type="nucleotide sequence ID" value="NC_009273.1"/>
</dbReference>
<dbReference type="GeneID" id="4961984"/>
<dbReference type="GO" id="GO:0009507">
    <property type="term" value="C:chloroplast"/>
    <property type="evidence" value="ECO:0007669"/>
    <property type="project" value="UniProtKB-SubCell"/>
</dbReference>
<dbReference type="GO" id="GO:1990904">
    <property type="term" value="C:ribonucleoprotein complex"/>
    <property type="evidence" value="ECO:0007669"/>
    <property type="project" value="UniProtKB-KW"/>
</dbReference>
<dbReference type="GO" id="GO:0005840">
    <property type="term" value="C:ribosome"/>
    <property type="evidence" value="ECO:0007669"/>
    <property type="project" value="UniProtKB-KW"/>
</dbReference>
<dbReference type="GO" id="GO:0003735">
    <property type="term" value="F:structural constituent of ribosome"/>
    <property type="evidence" value="ECO:0007669"/>
    <property type="project" value="InterPro"/>
</dbReference>
<dbReference type="GO" id="GO:0006412">
    <property type="term" value="P:translation"/>
    <property type="evidence" value="ECO:0007669"/>
    <property type="project" value="UniProtKB-UniRule"/>
</dbReference>
<dbReference type="FunFam" id="2.20.28.120:FF:000004">
    <property type="entry name" value="50S ribosomal protein L33, chloroplastic"/>
    <property type="match status" value="1"/>
</dbReference>
<dbReference type="Gene3D" id="2.20.28.120">
    <property type="entry name" value="Ribosomal protein L33"/>
    <property type="match status" value="1"/>
</dbReference>
<dbReference type="HAMAP" id="MF_00294">
    <property type="entry name" value="Ribosomal_bL33"/>
    <property type="match status" value="1"/>
</dbReference>
<dbReference type="InterPro" id="IPR001705">
    <property type="entry name" value="Ribosomal_bL33"/>
</dbReference>
<dbReference type="InterPro" id="IPR018264">
    <property type="entry name" value="Ribosomal_bL33_CS"/>
</dbReference>
<dbReference type="InterPro" id="IPR038584">
    <property type="entry name" value="Ribosomal_bL33_sf"/>
</dbReference>
<dbReference type="InterPro" id="IPR011332">
    <property type="entry name" value="Ribosomal_zn-bd"/>
</dbReference>
<dbReference type="NCBIfam" id="NF001764">
    <property type="entry name" value="PRK00504.1"/>
    <property type="match status" value="1"/>
</dbReference>
<dbReference type="NCBIfam" id="NF001860">
    <property type="entry name" value="PRK00595.1"/>
    <property type="match status" value="1"/>
</dbReference>
<dbReference type="NCBIfam" id="TIGR01023">
    <property type="entry name" value="rpmG_bact"/>
    <property type="match status" value="1"/>
</dbReference>
<dbReference type="PANTHER" id="PTHR43168">
    <property type="entry name" value="50S RIBOSOMAL PROTEIN L33, CHLOROPLASTIC"/>
    <property type="match status" value="1"/>
</dbReference>
<dbReference type="PANTHER" id="PTHR43168:SF2">
    <property type="entry name" value="LARGE RIBOSOMAL SUBUNIT PROTEIN BL33C"/>
    <property type="match status" value="1"/>
</dbReference>
<dbReference type="Pfam" id="PF00471">
    <property type="entry name" value="Ribosomal_L33"/>
    <property type="match status" value="1"/>
</dbReference>
<dbReference type="SUPFAM" id="SSF57829">
    <property type="entry name" value="Zn-binding ribosomal proteins"/>
    <property type="match status" value="1"/>
</dbReference>
<dbReference type="PROSITE" id="PS00582">
    <property type="entry name" value="RIBOSOMAL_L33"/>
    <property type="match status" value="1"/>
</dbReference>
<feature type="chain" id="PRO_0000356810" description="Large ribosomal subunit protein bL33c">
    <location>
        <begin position="1"/>
        <end position="66"/>
    </location>
</feature>
<accession>A4QLC7</accession>
<keyword id="KW-0150">Chloroplast</keyword>
<keyword id="KW-0934">Plastid</keyword>
<keyword id="KW-0687">Ribonucleoprotein</keyword>
<keyword id="KW-0689">Ribosomal protein</keyword>
<evidence type="ECO:0000255" key="1">
    <source>
        <dbReference type="HAMAP-Rule" id="MF_00294"/>
    </source>
</evidence>
<evidence type="ECO:0000305" key="2"/>
<name>RK33_LEPVR</name>
<gene>
    <name evidence="1" type="primary">rpl33</name>
</gene>